<dbReference type="EC" id="1.1.1.122" evidence="2"/>
<dbReference type="EMBL" id="VIYN02000128">
    <property type="status" value="NOT_ANNOTATED_CDS"/>
    <property type="molecule type" value="Genomic_DNA"/>
</dbReference>
<dbReference type="EMBL" id="BK068149">
    <property type="protein sequence ID" value="DBA56405.1"/>
    <property type="molecule type" value="mRNA"/>
</dbReference>
<dbReference type="PaxDb" id="9986-ENSOCUP00000022965"/>
<dbReference type="Ensembl" id="ENSOCUT00000048885.1">
    <property type="protein sequence ID" value="ENSOCUP00000034470.1"/>
    <property type="gene ID" value="ENSOCUG00000033836.1"/>
</dbReference>
<dbReference type="GeneTree" id="ENSGT00940000161346"/>
<dbReference type="InParanoid" id="A0A5F9CLT4"/>
<dbReference type="UniPathway" id="UPA00563"/>
<dbReference type="Proteomes" id="UP000001811">
    <property type="component" value="Unplaced"/>
</dbReference>
<dbReference type="Bgee" id="ENSOCUG00000033836">
    <property type="expression patterns" value="Expressed in liver and 16 other cell types or tissues"/>
</dbReference>
<dbReference type="GO" id="GO:0005829">
    <property type="term" value="C:cytosol"/>
    <property type="evidence" value="ECO:0007669"/>
    <property type="project" value="Ensembl"/>
</dbReference>
<dbReference type="GO" id="GO:0047834">
    <property type="term" value="F:D-threo-aldose 1-dehydrogenase activity"/>
    <property type="evidence" value="ECO:0007669"/>
    <property type="project" value="Ensembl"/>
</dbReference>
<dbReference type="GO" id="GO:0004303">
    <property type="term" value="F:estradiol 17-beta-dehydrogenase [NAD(P)+] activity"/>
    <property type="evidence" value="ECO:0007669"/>
    <property type="project" value="TreeGrafter"/>
</dbReference>
<dbReference type="GO" id="GO:0042802">
    <property type="term" value="F:identical protein binding"/>
    <property type="evidence" value="ECO:0007669"/>
    <property type="project" value="Ensembl"/>
</dbReference>
<dbReference type="GO" id="GO:0042355">
    <property type="term" value="P:L-fucose catabolic process"/>
    <property type="evidence" value="ECO:0007669"/>
    <property type="project" value="Ensembl"/>
</dbReference>
<dbReference type="GO" id="GO:0006706">
    <property type="term" value="P:steroid catabolic process"/>
    <property type="evidence" value="ECO:0007669"/>
    <property type="project" value="TreeGrafter"/>
</dbReference>
<dbReference type="FunFam" id="3.40.50.720:FF:000084">
    <property type="entry name" value="Short-chain dehydrogenase reductase"/>
    <property type="match status" value="1"/>
</dbReference>
<dbReference type="Gene3D" id="3.40.50.720">
    <property type="entry name" value="NAD(P)-binding Rossmann-like Domain"/>
    <property type="match status" value="1"/>
</dbReference>
<dbReference type="InterPro" id="IPR036291">
    <property type="entry name" value="NAD(P)-bd_dom_sf"/>
</dbReference>
<dbReference type="InterPro" id="IPR002347">
    <property type="entry name" value="SDR_fam"/>
</dbReference>
<dbReference type="NCBIfam" id="NF005559">
    <property type="entry name" value="PRK07231.1"/>
    <property type="match status" value="1"/>
</dbReference>
<dbReference type="PANTHER" id="PTHR43658:SF8">
    <property type="entry name" value="17-BETA-HYDROXYSTEROID DEHYDROGENASE 14-RELATED"/>
    <property type="match status" value="1"/>
</dbReference>
<dbReference type="PANTHER" id="PTHR43658">
    <property type="entry name" value="SHORT-CHAIN DEHYDROGENASE/REDUCTASE"/>
    <property type="match status" value="1"/>
</dbReference>
<dbReference type="Pfam" id="PF13561">
    <property type="entry name" value="adh_short_C2"/>
    <property type="match status" value="1"/>
</dbReference>
<dbReference type="PRINTS" id="PR00081">
    <property type="entry name" value="GDHRDH"/>
</dbReference>
<dbReference type="PRINTS" id="PR00080">
    <property type="entry name" value="SDRFAMILY"/>
</dbReference>
<dbReference type="SUPFAM" id="SSF51735">
    <property type="entry name" value="NAD(P)-binding Rossmann-fold domains"/>
    <property type="match status" value="1"/>
</dbReference>
<gene>
    <name type="primary">HSD17B14</name>
</gene>
<name>DHB14_RABIT</name>
<accession>A0AAT9JA24</accession>
<accession>A0A5F9CLT4</accession>
<keyword id="KW-0119">Carbohydrate metabolism</keyword>
<keyword id="KW-0294">Fucose metabolism</keyword>
<keyword id="KW-0520">NAD</keyword>
<keyword id="KW-0560">Oxidoreductase</keyword>
<keyword id="KW-1185">Reference proteome</keyword>
<sequence length="284" mass="30014">MASGARYAGKVVVVTGAARGIGAGIARAFVDSGAQVVICDKDERGGRALEQELRGAVFIRCDVTREEDVRALLSDTVHRFGRLDCVVNNAGSHPPLQPLEETTAQGFRELLELNLLGTYTLCKLAFPHLRRSRGNIINISTLVGAVGQLQGVPYAATKGAVTALTKALALDESQYGVRVNCISPGNIWTPLWQELAALAPDPRAAIREGAMAQPLGRMGQPAEVGAAAVFLASEASFCTGLELFVTGGAELGSGPENFFRSLGLCVVPEDVPPPTSRPRICSYK</sequence>
<proteinExistence type="evidence at protein level"/>
<feature type="chain" id="PRO_0000461920" description="L-fucose dehydrogenase">
    <location>
        <begin position="1"/>
        <end position="284"/>
    </location>
</feature>
<feature type="binding site" evidence="1">
    <location>
        <position position="19"/>
    </location>
    <ligand>
        <name>NAD(+)</name>
        <dbReference type="ChEBI" id="CHEBI:57540"/>
    </ligand>
</feature>
<feature type="binding site" evidence="1">
    <location>
        <position position="21"/>
    </location>
    <ligand>
        <name>NAD(+)</name>
        <dbReference type="ChEBI" id="CHEBI:57540"/>
    </ligand>
</feature>
<feature type="binding site" evidence="1">
    <location>
        <position position="40"/>
    </location>
    <ligand>
        <name>NAD(+)</name>
        <dbReference type="ChEBI" id="CHEBI:57540"/>
    </ligand>
</feature>
<feature type="binding site" evidence="1">
    <location>
        <position position="41"/>
    </location>
    <ligand>
        <name>NAD(+)</name>
        <dbReference type="ChEBI" id="CHEBI:57540"/>
    </ligand>
</feature>
<feature type="binding site" evidence="1">
    <location>
        <position position="62"/>
    </location>
    <ligand>
        <name>NAD(+)</name>
        <dbReference type="ChEBI" id="CHEBI:57540"/>
    </ligand>
</feature>
<feature type="binding site" evidence="1">
    <location>
        <position position="63"/>
    </location>
    <ligand>
        <name>NAD(+)</name>
        <dbReference type="ChEBI" id="CHEBI:57540"/>
    </ligand>
</feature>
<feature type="binding site" evidence="1">
    <location>
        <position position="89"/>
    </location>
    <ligand>
        <name>NAD(+)</name>
        <dbReference type="ChEBI" id="CHEBI:57540"/>
    </ligand>
</feature>
<feature type="binding site" evidence="1">
    <location>
        <position position="154"/>
    </location>
    <ligand>
        <name>NAD(+)</name>
        <dbReference type="ChEBI" id="CHEBI:57540"/>
    </ligand>
</feature>
<feature type="binding site" evidence="1">
    <location>
        <position position="158"/>
    </location>
    <ligand>
        <name>NAD(+)</name>
        <dbReference type="ChEBI" id="CHEBI:57540"/>
    </ligand>
</feature>
<feature type="binding site" evidence="1">
    <location>
        <position position="187"/>
    </location>
    <ligand>
        <name>NAD(+)</name>
        <dbReference type="ChEBI" id="CHEBI:57540"/>
    </ligand>
</feature>
<feature type="binding site" evidence="1">
    <location>
        <position position="189"/>
    </location>
    <ligand>
        <name>NAD(+)</name>
        <dbReference type="ChEBI" id="CHEBI:57540"/>
    </ligand>
</feature>
<feature type="binding site" evidence="1">
    <location>
        <position position="191"/>
    </location>
    <ligand>
        <name>NAD(+)</name>
        <dbReference type="ChEBI" id="CHEBI:57540"/>
    </ligand>
</feature>
<feature type="mutagenesis site" description="Loss of L-fucose dehydrogenase activity." evidence="2">
    <original>Y</original>
    <variation>F</variation>
    <location>
        <position position="154"/>
    </location>
</feature>
<protein>
    <recommendedName>
        <fullName>L-fucose dehydrogenase</fullName>
        <ecNumber evidence="2">1.1.1.122</ecNumber>
    </recommendedName>
    <alternativeName>
        <fullName>Hydroxysteroid 17-beta dehydrogenase 14</fullName>
    </alternativeName>
</protein>
<reference key="1">
    <citation type="journal article" date="2011" name="Nature">
        <title>A high-resolution map of human evolutionary constraint using 29 mammals.</title>
        <authorList>
            <person name="Lindblad-Toh K."/>
            <person name="Garber M."/>
            <person name="Zuk O."/>
            <person name="Lin M.F."/>
            <person name="Parker B.J."/>
            <person name="Washietl S."/>
            <person name="Kheradpour P."/>
            <person name="Ernst J."/>
            <person name="Jordan G."/>
            <person name="Mauceli E."/>
            <person name="Ward L.D."/>
            <person name="Lowe C.B."/>
            <person name="Holloway A.K."/>
            <person name="Clamp M."/>
            <person name="Gnerre S."/>
            <person name="Alfoldi J."/>
            <person name="Beal K."/>
            <person name="Chang J."/>
            <person name="Clawson H."/>
            <person name="Cuff J."/>
            <person name="Di Palma F."/>
            <person name="Fitzgerald S."/>
            <person name="Flicek P."/>
            <person name="Guttman M."/>
            <person name="Hubisz M.J."/>
            <person name="Jaffe D.B."/>
            <person name="Jungreis I."/>
            <person name="Kent W.J."/>
            <person name="Kostka D."/>
            <person name="Lara M."/>
            <person name="Martins A.L."/>
            <person name="Massingham T."/>
            <person name="Moltke I."/>
            <person name="Raney B.J."/>
            <person name="Rasmussen M.D."/>
            <person name="Robinson J."/>
            <person name="Stark A."/>
            <person name="Vilella A.J."/>
            <person name="Wen J."/>
            <person name="Xie X."/>
            <person name="Zody M.C."/>
            <person name="Baldwin J."/>
            <person name="Bloom T."/>
            <person name="Chin C.W."/>
            <person name="Heiman D."/>
            <person name="Nicol R."/>
            <person name="Nusbaum C."/>
            <person name="Young S."/>
            <person name="Wilkinson J."/>
            <person name="Worley K.C."/>
            <person name="Kovar C.L."/>
            <person name="Muzny D.M."/>
            <person name="Gibbs R.A."/>
            <person name="Cree A."/>
            <person name="Dihn H.H."/>
            <person name="Fowler G."/>
            <person name="Jhangiani S."/>
            <person name="Joshi V."/>
            <person name="Lee S."/>
            <person name="Lewis L.R."/>
            <person name="Nazareth L.V."/>
            <person name="Okwuonu G."/>
            <person name="Santibanez J."/>
            <person name="Warren W.C."/>
            <person name="Mardis E.R."/>
            <person name="Weinstock G.M."/>
            <person name="Wilson R.K."/>
            <person name="Delehaunty K."/>
            <person name="Dooling D."/>
            <person name="Fronik C."/>
            <person name="Fulton L."/>
            <person name="Fulton B."/>
            <person name="Graves T."/>
            <person name="Minx P."/>
            <person name="Sodergren E."/>
            <person name="Birney E."/>
            <person name="Margulies E.H."/>
            <person name="Herrero J."/>
            <person name="Green E.D."/>
            <person name="Haussler D."/>
            <person name="Siepel A."/>
            <person name="Goldman N."/>
            <person name="Pollard K.S."/>
            <person name="Pedersen J.S."/>
            <person name="Lander E.S."/>
            <person name="Kellis M."/>
        </authorList>
    </citation>
    <scope>NUCLEOTIDE SEQUENCE [LARGE SCALE GENOMIC DNA]</scope>
    <source>
        <strain>Thorbecke</strain>
    </source>
</reference>
<reference key="2">
    <citation type="journal article" date="2024" name="J. Biol. Chem.">
        <title>Hydroxysteroid 17-beta dehydrogenase 14 (HSD17B14) is an L-fucose dehydrogenase, the initial enzyme of the L-fucose degradation pathway.</title>
        <authorList>
            <person name="Witecka A."/>
            <person name="Kazak V."/>
            <person name="Kwiatkowski S."/>
            <person name="Kiersztan A."/>
            <person name="Jagielski A.K."/>
            <person name="Kozminski W."/>
            <person name="Augustyniak R."/>
            <person name="Drozak J."/>
        </authorList>
    </citation>
    <scope>IDENTIFICATION</scope>
    <scope>FUNCTION</scope>
    <scope>CATALYTIC ACTIVITY</scope>
    <scope>BIOPHYSICOCHEMICAL PROPERTIES</scope>
    <scope>MUTAGENESIS OF TYR-154</scope>
</reference>
<evidence type="ECO:0000250" key="1">
    <source>
        <dbReference type="UniProtKB" id="Q9BPX1"/>
    </source>
</evidence>
<evidence type="ECO:0000269" key="2">
    <source>
    </source>
</evidence>
<evidence type="ECO:0000305" key="3"/>
<evidence type="ECO:0000305" key="4">
    <source>
    </source>
</evidence>
<comment type="function">
    <text evidence="1">Catalyzes the NAD(+)-dependent oxidation of L-fucose, yielding L-fucono-1,5-lactone, which rapidly converts spontaneously to L-fucone-1,4-lactone. Can also act on D-arabinose and L-galactose, with lower catalytic efficiency. Does not use NADPH. May be the initial enzyme of the putative L-fucose degradation pathway in mammals.</text>
</comment>
<comment type="catalytic activity">
    <reaction evidence="2">
        <text>L-fucose + NAD(+) = L-fucono-1,5-lactone + NADH + H(+)</text>
        <dbReference type="Rhea" id="RHEA:81515"/>
        <dbReference type="ChEBI" id="CHEBI:2181"/>
        <dbReference type="ChEBI" id="CHEBI:15378"/>
        <dbReference type="ChEBI" id="CHEBI:57540"/>
        <dbReference type="ChEBI" id="CHEBI:57945"/>
        <dbReference type="ChEBI" id="CHEBI:81457"/>
        <dbReference type="EC" id="1.1.1.122"/>
    </reaction>
    <physiologicalReaction direction="left-to-right" evidence="4">
        <dbReference type="Rhea" id="RHEA:81516"/>
    </physiologicalReaction>
</comment>
<comment type="catalytic activity">
    <reaction evidence="2">
        <text>D-arabinose + NAD(+) = D-arabinono-1,5-lactone + NADH + H(+)</text>
        <dbReference type="Rhea" id="RHEA:81519"/>
        <dbReference type="ChEBI" id="CHEBI:15378"/>
        <dbReference type="ChEBI" id="CHEBI:46994"/>
        <dbReference type="ChEBI" id="CHEBI:57540"/>
        <dbReference type="ChEBI" id="CHEBI:57945"/>
        <dbReference type="ChEBI" id="CHEBI:194242"/>
        <dbReference type="EC" id="1.1.1.122"/>
    </reaction>
    <physiologicalReaction direction="left-to-right" evidence="4">
        <dbReference type="Rhea" id="RHEA:81520"/>
    </physiologicalReaction>
</comment>
<comment type="catalytic activity">
    <reaction evidence="2">
        <text>L-galactose + NAD(+) = L-galactono-1,5-lactone + NADH + H(+)</text>
        <dbReference type="Rhea" id="RHEA:81523"/>
        <dbReference type="ChEBI" id="CHEBI:15378"/>
        <dbReference type="ChEBI" id="CHEBI:37619"/>
        <dbReference type="ChEBI" id="CHEBI:57540"/>
        <dbReference type="ChEBI" id="CHEBI:57945"/>
        <dbReference type="ChEBI" id="CHEBI:182410"/>
        <dbReference type="EC" id="1.1.1.122"/>
    </reaction>
    <physiologicalReaction direction="left-to-right" evidence="4">
        <dbReference type="Rhea" id="RHEA:81524"/>
    </physiologicalReaction>
</comment>
<comment type="biophysicochemical properties">
    <kinetics>
        <KM evidence="2">45.9 uM for NAD(+)</KM>
        <KM evidence="2">136.6 uM for L-fucose</KM>
        <Vmax evidence="2">5.9E-4 umol/min/mg enzyme with beta-estradiol as substrate</Vmax>
        <Vmax evidence="2">13.15 umol/min/mg enzyme with L-fuctose as substrate</Vmax>
        <text evidence="2">kcat is 7.00 sec(-1) with L-fucose as substrate. kcat is 7.00 sec(-1) with NAD(+) as substrate (PubMed:38944119). kcat/KM=4878 min(-1) mM(-1) for L-fuctose (PubMed:38944119).</text>
    </kinetics>
    <phDependence>
        <text evidence="2">Optimum pH is 8.5 to 10.0.</text>
    </phDependence>
</comment>
<comment type="pathway">
    <text evidence="3">Carbohydrate degradation; L-fucose degradation.</text>
</comment>
<comment type="similarity">
    <text evidence="3">Belongs to the short-chain dehydrogenases/reductases (SDR) family.</text>
</comment>
<organism>
    <name type="scientific">Oryctolagus cuniculus</name>
    <name type="common">Rabbit</name>
    <dbReference type="NCBI Taxonomy" id="9986"/>
    <lineage>
        <taxon>Eukaryota</taxon>
        <taxon>Metazoa</taxon>
        <taxon>Chordata</taxon>
        <taxon>Craniata</taxon>
        <taxon>Vertebrata</taxon>
        <taxon>Euteleostomi</taxon>
        <taxon>Mammalia</taxon>
        <taxon>Eutheria</taxon>
        <taxon>Euarchontoglires</taxon>
        <taxon>Glires</taxon>
        <taxon>Lagomorpha</taxon>
        <taxon>Leporidae</taxon>
        <taxon>Oryctolagus</taxon>
    </lineage>
</organism>